<protein>
    <recommendedName>
        <fullName>NAD(P)H-quinone oxidoreductase subunit 5, chloroplastic</fullName>
        <ecNumber>7.1.1.-</ecNumber>
    </recommendedName>
    <alternativeName>
        <fullName>NAD(P)H dehydrogenase subunit 5</fullName>
    </alternativeName>
    <alternativeName>
        <fullName>NADH-plastoquinone oxidoreductase subunit 5</fullName>
    </alternativeName>
</protein>
<reference key="1">
    <citation type="journal article" date="2000" name="Plant Mol. Biol. Rep.">
        <title>Chinese spring wheat (Triticum aestivum L.) chloroplast genome: complete sequence and contig clones.</title>
        <authorList>
            <person name="Ogihara Y."/>
            <person name="Isono K."/>
            <person name="Kojima T."/>
            <person name="Endo A."/>
            <person name="Hanaoka M."/>
            <person name="Shiina T."/>
            <person name="Terachi T."/>
            <person name="Utsugi S."/>
            <person name="Murata M."/>
            <person name="Mori N."/>
            <person name="Takumi S."/>
            <person name="Ikeo K."/>
            <person name="Gojobori T."/>
            <person name="Murai R."/>
            <person name="Murai K."/>
            <person name="Matsuoka Y."/>
            <person name="Ohnishi Y."/>
            <person name="Tajiri H."/>
            <person name="Tsunewaki K."/>
        </authorList>
    </citation>
    <scope>NUCLEOTIDE SEQUENCE [LARGE SCALE GENOMIC DNA]</scope>
    <source>
        <strain>cv. Chinese Spring</strain>
    </source>
</reference>
<gene>
    <name type="primary">ndhF</name>
</gene>
<dbReference type="EC" id="7.1.1.-"/>
<dbReference type="EMBL" id="AB042240">
    <property type="protein sequence ID" value="BAB47082.1"/>
    <property type="molecule type" value="Genomic_DNA"/>
</dbReference>
<dbReference type="RefSeq" id="NP_114305.1">
    <property type="nucleotide sequence ID" value="NC_002762.1"/>
</dbReference>
<dbReference type="SMR" id="Q95H46"/>
<dbReference type="STRING" id="4565.Q95H46"/>
<dbReference type="PaxDb" id="4565-EPlTAEP00000010076"/>
<dbReference type="GeneID" id="803180"/>
<dbReference type="KEGG" id="taes:803180"/>
<dbReference type="eggNOG" id="KOG4668">
    <property type="taxonomic scope" value="Eukaryota"/>
</dbReference>
<dbReference type="Proteomes" id="UP000019116">
    <property type="component" value="Chloroplast"/>
</dbReference>
<dbReference type="ExpressionAtlas" id="Q95H46">
    <property type="expression patterns" value="differential"/>
</dbReference>
<dbReference type="GO" id="GO:0009535">
    <property type="term" value="C:chloroplast thylakoid membrane"/>
    <property type="evidence" value="ECO:0007669"/>
    <property type="project" value="UniProtKB-SubCell"/>
</dbReference>
<dbReference type="GO" id="GO:0008137">
    <property type="term" value="F:NADH dehydrogenase (ubiquinone) activity"/>
    <property type="evidence" value="ECO:0007669"/>
    <property type="project" value="InterPro"/>
</dbReference>
<dbReference type="GO" id="GO:0048038">
    <property type="term" value="F:quinone binding"/>
    <property type="evidence" value="ECO:0007669"/>
    <property type="project" value="UniProtKB-KW"/>
</dbReference>
<dbReference type="GO" id="GO:0042773">
    <property type="term" value="P:ATP synthesis coupled electron transport"/>
    <property type="evidence" value="ECO:0007669"/>
    <property type="project" value="InterPro"/>
</dbReference>
<dbReference type="GO" id="GO:0015990">
    <property type="term" value="P:electron transport coupled proton transport"/>
    <property type="evidence" value="ECO:0000318"/>
    <property type="project" value="GO_Central"/>
</dbReference>
<dbReference type="Gene3D" id="1.20.5.2700">
    <property type="match status" value="1"/>
</dbReference>
<dbReference type="InterPro" id="IPR002128">
    <property type="entry name" value="NADH_UbQ_OxRdtase_chlpt_su5_C"/>
</dbReference>
<dbReference type="InterPro" id="IPR018393">
    <property type="entry name" value="NADHpl_OxRdtase_5_subgr"/>
</dbReference>
<dbReference type="InterPro" id="IPR001750">
    <property type="entry name" value="ND/Mrp_TM"/>
</dbReference>
<dbReference type="InterPro" id="IPR003945">
    <property type="entry name" value="NU5C-like"/>
</dbReference>
<dbReference type="InterPro" id="IPR001516">
    <property type="entry name" value="Proton_antipo_N"/>
</dbReference>
<dbReference type="NCBIfam" id="TIGR01974">
    <property type="entry name" value="NDH_I_L"/>
    <property type="match status" value="1"/>
</dbReference>
<dbReference type="NCBIfam" id="NF005141">
    <property type="entry name" value="PRK06590.1"/>
    <property type="match status" value="1"/>
</dbReference>
<dbReference type="PANTHER" id="PTHR42829">
    <property type="entry name" value="NADH-UBIQUINONE OXIDOREDUCTASE CHAIN 5"/>
    <property type="match status" value="1"/>
</dbReference>
<dbReference type="PANTHER" id="PTHR42829:SF2">
    <property type="entry name" value="NADH-UBIQUINONE OXIDOREDUCTASE CHAIN 5"/>
    <property type="match status" value="1"/>
</dbReference>
<dbReference type="Pfam" id="PF01010">
    <property type="entry name" value="Proton_antipo_C"/>
    <property type="match status" value="1"/>
</dbReference>
<dbReference type="Pfam" id="PF00361">
    <property type="entry name" value="Proton_antipo_M"/>
    <property type="match status" value="1"/>
</dbReference>
<dbReference type="Pfam" id="PF00662">
    <property type="entry name" value="Proton_antipo_N"/>
    <property type="match status" value="1"/>
</dbReference>
<dbReference type="PRINTS" id="PR01434">
    <property type="entry name" value="NADHDHGNASE5"/>
</dbReference>
<dbReference type="PRINTS" id="PR01435">
    <property type="entry name" value="NPOXDRDTASE5"/>
</dbReference>
<accession>Q95H46</accession>
<proteinExistence type="inferred from homology"/>
<geneLocation type="chloroplast"/>
<sequence length="739" mass="82861">MEHTYQYAWVIPLLPLPVIMSMGFGLILIPTATKNLRRIWAFPSVLLLSIAMVFSVQLSIQQINGSSIYQYLWSWTVNNDFSLEFGYLIDPLTSIMLILITTVGILVLIYSDGYMSHDEGYLRFFVYISFFNTSMLGLVTSSNLIQIYFFWELVGMCSYLLIGFWFTRPIAASACQKAFVTNRVGDFGLLLGILGFFWITGSLEFRDLFKIANNWIPNNGVNSLLTTLCAFLLFLGAVAKSAQFPLHVWLPDAMEGPTPISALIQAATMVAAGIFLLARLLPLFISLPLIMSFISLVGTITLFLGATLALAQRDIKRSLAYSTMSQLGYMMLALGIGSYQAALFHLITHAYSKALLFLGSGSVIHSMEPLVGYSPDKSQNMVLMGGLRKYIPITRTTFLWGTLSLCGIPPLACFWSKDEILSNSWLYSPFFGIIASFTAGLTAFYMFRIYLLTFDGYLRVHFQNYSSTKESSLYSISLWGKRIPKGVNRDFVLSTTKSGVSFFSQNIPKIQGNTRNRIGSFTTSFGAKNTFAYPHETGNTMLFPLLILLLFTLFIGFIGISFDNGGIGNGIAELTILSKWLTPSINFTQESSNSFVNSYEFITNAISSVTLAIFGLFIAYIFYGSAYSFFQNLDLINSFYKGNPKKEFLDQVKKNIYSWSYNRGYIDIFYTRVFTLGIRGLTELTEFFDKGVIYGITNGVGLPSFCIGEEIKYVGGGRISSYLFFFLCYVSLFLFFFLS</sequence>
<organism>
    <name type="scientific">Triticum aestivum</name>
    <name type="common">Wheat</name>
    <dbReference type="NCBI Taxonomy" id="4565"/>
    <lineage>
        <taxon>Eukaryota</taxon>
        <taxon>Viridiplantae</taxon>
        <taxon>Streptophyta</taxon>
        <taxon>Embryophyta</taxon>
        <taxon>Tracheophyta</taxon>
        <taxon>Spermatophyta</taxon>
        <taxon>Magnoliopsida</taxon>
        <taxon>Liliopsida</taxon>
        <taxon>Poales</taxon>
        <taxon>Poaceae</taxon>
        <taxon>BOP clade</taxon>
        <taxon>Pooideae</taxon>
        <taxon>Triticodae</taxon>
        <taxon>Triticeae</taxon>
        <taxon>Triticinae</taxon>
        <taxon>Triticum</taxon>
    </lineage>
</organism>
<evidence type="ECO:0000250" key="1"/>
<evidence type="ECO:0000255" key="2"/>
<evidence type="ECO:0000305" key="3"/>
<feature type="chain" id="PRO_0000118208" description="NAD(P)H-quinone oxidoreductase subunit 5, chloroplastic">
    <location>
        <begin position="1"/>
        <end position="739"/>
    </location>
</feature>
<feature type="transmembrane region" description="Helical" evidence="2">
    <location>
        <begin position="9"/>
        <end position="29"/>
    </location>
</feature>
<feature type="transmembrane region" description="Helical" evidence="2">
    <location>
        <begin position="39"/>
        <end position="59"/>
    </location>
</feature>
<feature type="transmembrane region" description="Helical" evidence="2">
    <location>
        <begin position="89"/>
        <end position="109"/>
    </location>
</feature>
<feature type="transmembrane region" description="Helical" evidence="2">
    <location>
        <begin position="125"/>
        <end position="145"/>
    </location>
</feature>
<feature type="transmembrane region" description="Helical" evidence="2">
    <location>
        <begin position="147"/>
        <end position="167"/>
    </location>
</feature>
<feature type="transmembrane region" description="Helical" evidence="2">
    <location>
        <begin position="185"/>
        <end position="205"/>
    </location>
</feature>
<feature type="transmembrane region" description="Helical" evidence="2">
    <location>
        <begin position="219"/>
        <end position="239"/>
    </location>
</feature>
<feature type="transmembrane region" description="Helical" evidence="2">
    <location>
        <begin position="258"/>
        <end position="278"/>
    </location>
</feature>
<feature type="transmembrane region" description="Helical" evidence="2">
    <location>
        <begin position="280"/>
        <end position="300"/>
    </location>
</feature>
<feature type="transmembrane region" description="Helical" evidence="2">
    <location>
        <begin position="327"/>
        <end position="347"/>
    </location>
</feature>
<feature type="transmembrane region" description="Helical" evidence="2">
    <location>
        <begin position="354"/>
        <end position="374"/>
    </location>
</feature>
<feature type="transmembrane region" description="Helical" evidence="2">
    <location>
        <begin position="396"/>
        <end position="416"/>
    </location>
</feature>
<feature type="transmembrane region" description="Helical" evidence="2">
    <location>
        <begin position="425"/>
        <end position="445"/>
    </location>
</feature>
<feature type="transmembrane region" description="Helical" evidence="2">
    <location>
        <begin position="542"/>
        <end position="562"/>
    </location>
</feature>
<feature type="transmembrane region" description="Helical" evidence="2">
    <location>
        <begin position="610"/>
        <end position="630"/>
    </location>
</feature>
<feature type="transmembrane region" description="Helical" evidence="2">
    <location>
        <begin position="719"/>
        <end position="739"/>
    </location>
</feature>
<comment type="function">
    <text evidence="1">NDH shuttles electrons from NAD(P)H:plastoquinone, via FMN and iron-sulfur (Fe-S) centers, to quinones in the photosynthetic chain and possibly in a chloroplast respiratory chain. The immediate electron acceptor for the enzyme in this species is believed to be plastoquinone. Couples the redox reaction to proton translocation, and thus conserves the redox energy in a proton gradient (By similarity).</text>
</comment>
<comment type="catalytic activity">
    <reaction>
        <text>a plastoquinone + NADH + (n+1) H(+)(in) = a plastoquinol + NAD(+) + n H(+)(out)</text>
        <dbReference type="Rhea" id="RHEA:42608"/>
        <dbReference type="Rhea" id="RHEA-COMP:9561"/>
        <dbReference type="Rhea" id="RHEA-COMP:9562"/>
        <dbReference type="ChEBI" id="CHEBI:15378"/>
        <dbReference type="ChEBI" id="CHEBI:17757"/>
        <dbReference type="ChEBI" id="CHEBI:57540"/>
        <dbReference type="ChEBI" id="CHEBI:57945"/>
        <dbReference type="ChEBI" id="CHEBI:62192"/>
    </reaction>
</comment>
<comment type="catalytic activity">
    <reaction>
        <text>a plastoquinone + NADPH + (n+1) H(+)(in) = a plastoquinol + NADP(+) + n H(+)(out)</text>
        <dbReference type="Rhea" id="RHEA:42612"/>
        <dbReference type="Rhea" id="RHEA-COMP:9561"/>
        <dbReference type="Rhea" id="RHEA-COMP:9562"/>
        <dbReference type="ChEBI" id="CHEBI:15378"/>
        <dbReference type="ChEBI" id="CHEBI:17757"/>
        <dbReference type="ChEBI" id="CHEBI:57783"/>
        <dbReference type="ChEBI" id="CHEBI:58349"/>
        <dbReference type="ChEBI" id="CHEBI:62192"/>
    </reaction>
</comment>
<comment type="subunit">
    <text evidence="1">NDH is composed of at least 16 different subunits, 5 of which are encoded in the nucleus.</text>
</comment>
<comment type="subcellular location">
    <subcellularLocation>
        <location evidence="1">Plastid</location>
        <location evidence="1">Chloroplast thylakoid membrane</location>
        <topology evidence="1">Multi-pass membrane protein</topology>
    </subcellularLocation>
</comment>
<comment type="similarity">
    <text evidence="3">Belongs to the complex I subunit 5 family.</text>
</comment>
<name>NU5C_WHEAT</name>
<keyword id="KW-0150">Chloroplast</keyword>
<keyword id="KW-0472">Membrane</keyword>
<keyword id="KW-0520">NAD</keyword>
<keyword id="KW-0521">NADP</keyword>
<keyword id="KW-0934">Plastid</keyword>
<keyword id="KW-0618">Plastoquinone</keyword>
<keyword id="KW-0874">Quinone</keyword>
<keyword id="KW-1185">Reference proteome</keyword>
<keyword id="KW-0793">Thylakoid</keyword>
<keyword id="KW-1278">Translocase</keyword>
<keyword id="KW-0812">Transmembrane</keyword>
<keyword id="KW-1133">Transmembrane helix</keyword>
<keyword id="KW-0813">Transport</keyword>